<dbReference type="EC" id="6.1.1.14" evidence="1"/>
<dbReference type="EMBL" id="CP001074">
    <property type="protein sequence ID" value="ACE89965.1"/>
    <property type="molecule type" value="Genomic_DNA"/>
</dbReference>
<dbReference type="SMR" id="B3PRI2"/>
<dbReference type="KEGG" id="rec:RHECIAT_CH0000980"/>
<dbReference type="eggNOG" id="COG0751">
    <property type="taxonomic scope" value="Bacteria"/>
</dbReference>
<dbReference type="HOGENOM" id="CLU_007220_2_1_5"/>
<dbReference type="Proteomes" id="UP000008817">
    <property type="component" value="Chromosome"/>
</dbReference>
<dbReference type="GO" id="GO:0005829">
    <property type="term" value="C:cytosol"/>
    <property type="evidence" value="ECO:0007669"/>
    <property type="project" value="TreeGrafter"/>
</dbReference>
<dbReference type="GO" id="GO:0004814">
    <property type="term" value="F:arginine-tRNA ligase activity"/>
    <property type="evidence" value="ECO:0007669"/>
    <property type="project" value="InterPro"/>
</dbReference>
<dbReference type="GO" id="GO:0005524">
    <property type="term" value="F:ATP binding"/>
    <property type="evidence" value="ECO:0007669"/>
    <property type="project" value="UniProtKB-UniRule"/>
</dbReference>
<dbReference type="GO" id="GO:0004820">
    <property type="term" value="F:glycine-tRNA ligase activity"/>
    <property type="evidence" value="ECO:0007669"/>
    <property type="project" value="UniProtKB-UniRule"/>
</dbReference>
<dbReference type="GO" id="GO:0006420">
    <property type="term" value="P:arginyl-tRNA aminoacylation"/>
    <property type="evidence" value="ECO:0007669"/>
    <property type="project" value="InterPro"/>
</dbReference>
<dbReference type="GO" id="GO:0006426">
    <property type="term" value="P:glycyl-tRNA aminoacylation"/>
    <property type="evidence" value="ECO:0007669"/>
    <property type="project" value="UniProtKB-UniRule"/>
</dbReference>
<dbReference type="HAMAP" id="MF_00255">
    <property type="entry name" value="Gly_tRNA_synth_beta"/>
    <property type="match status" value="1"/>
</dbReference>
<dbReference type="InterPro" id="IPR008909">
    <property type="entry name" value="DALR_anticod-bd"/>
</dbReference>
<dbReference type="InterPro" id="IPR015944">
    <property type="entry name" value="Gly-tRNA-synth_bsu"/>
</dbReference>
<dbReference type="InterPro" id="IPR006194">
    <property type="entry name" value="Gly-tRNA-synth_heterodimer"/>
</dbReference>
<dbReference type="NCBIfam" id="TIGR00211">
    <property type="entry name" value="glyS"/>
    <property type="match status" value="1"/>
</dbReference>
<dbReference type="PANTHER" id="PTHR30075:SF2">
    <property type="entry name" value="GLYCINE--TRNA LIGASE, CHLOROPLASTIC_MITOCHONDRIAL 2"/>
    <property type="match status" value="1"/>
</dbReference>
<dbReference type="PANTHER" id="PTHR30075">
    <property type="entry name" value="GLYCYL-TRNA SYNTHETASE"/>
    <property type="match status" value="1"/>
</dbReference>
<dbReference type="Pfam" id="PF05746">
    <property type="entry name" value="DALR_1"/>
    <property type="match status" value="1"/>
</dbReference>
<dbReference type="Pfam" id="PF02092">
    <property type="entry name" value="tRNA_synt_2f"/>
    <property type="match status" value="1"/>
</dbReference>
<dbReference type="PRINTS" id="PR01045">
    <property type="entry name" value="TRNASYNTHGB"/>
</dbReference>
<dbReference type="SUPFAM" id="SSF109604">
    <property type="entry name" value="HD-domain/PDEase-like"/>
    <property type="match status" value="1"/>
</dbReference>
<dbReference type="PROSITE" id="PS50861">
    <property type="entry name" value="AA_TRNA_LIGASE_II_GLYAB"/>
    <property type="match status" value="1"/>
</dbReference>
<comment type="catalytic activity">
    <reaction evidence="1">
        <text>tRNA(Gly) + glycine + ATP = glycyl-tRNA(Gly) + AMP + diphosphate</text>
        <dbReference type="Rhea" id="RHEA:16013"/>
        <dbReference type="Rhea" id="RHEA-COMP:9664"/>
        <dbReference type="Rhea" id="RHEA-COMP:9683"/>
        <dbReference type="ChEBI" id="CHEBI:30616"/>
        <dbReference type="ChEBI" id="CHEBI:33019"/>
        <dbReference type="ChEBI" id="CHEBI:57305"/>
        <dbReference type="ChEBI" id="CHEBI:78442"/>
        <dbReference type="ChEBI" id="CHEBI:78522"/>
        <dbReference type="ChEBI" id="CHEBI:456215"/>
        <dbReference type="EC" id="6.1.1.14"/>
    </reaction>
</comment>
<comment type="subunit">
    <text evidence="1">Tetramer of two alpha and two beta subunits.</text>
</comment>
<comment type="subcellular location">
    <subcellularLocation>
        <location evidence="1">Cytoplasm</location>
    </subcellularLocation>
</comment>
<comment type="similarity">
    <text evidence="1">Belongs to the class-II aminoacyl-tRNA synthetase family.</text>
</comment>
<keyword id="KW-0030">Aminoacyl-tRNA synthetase</keyword>
<keyword id="KW-0067">ATP-binding</keyword>
<keyword id="KW-0963">Cytoplasm</keyword>
<keyword id="KW-0436">Ligase</keyword>
<keyword id="KW-0547">Nucleotide-binding</keyword>
<keyword id="KW-0648">Protein biosynthesis</keyword>
<sequence length="704" mass="77176">MPNLLLELRSEEIPARMQRKAAGDLKKLVTDALVEAGLSYEGAREYWTPRRLALDIHGLTARSADVREERKGPRTDANEKAIEGFLRGAGLSSVSEAQVVSDPKKGDFYVAVISKPGRATEEIVAEVMPGIIRDFPWPKSMRWGKASSKSGALRWVRPLQSIVCTFGPEHEETTVIPFEIDGITASNITYGHRFHAPEAITVRRFDDYAASLEKAKVILDAERRKDIILHDARDIAFANGLELVEDEGLLEEVSGLVEWPQVLMGSFEEDYLSIPSEIIRLTIKTNQKCFVTRKQGEDTLSNRFILVSNIQAHDGGKEIVHGNGKVVRARLSDALHFWKRDQGNLPDLETLAASAAKFGLDLQKPLDQRMAKLDALDVTFHAKLGTQGARVARIRALAKELAAITGADPALTDRAAVLAKADLRTEAVGEFPELQGLMGRKYAVLQGENASVAAAVEDHYKPQGPSDRVPEDKVAITLALADKLDTLTGFWAIDEKPTGSKDPFALRRAALGVVRILLERRVRLPLLATTRDGDLLSFFHDRLKVYLRDQGARYDLIDAVLTPDADDLLMVARRVEALTAFITSEDGKNLLAGTKRATQLLAAEEKKGTVIADGVSPALLKLDAEKELFAAISSASKDAADAVAGEDFRSAMEALSKLRGPVDRFFEEVLVNDEDAAIRANRLALLRLIREATGTVADFSKISG</sequence>
<proteinExistence type="inferred from homology"/>
<evidence type="ECO:0000255" key="1">
    <source>
        <dbReference type="HAMAP-Rule" id="MF_00255"/>
    </source>
</evidence>
<organism>
    <name type="scientific">Rhizobium etli (strain CIAT 652)</name>
    <dbReference type="NCBI Taxonomy" id="491916"/>
    <lineage>
        <taxon>Bacteria</taxon>
        <taxon>Pseudomonadati</taxon>
        <taxon>Pseudomonadota</taxon>
        <taxon>Alphaproteobacteria</taxon>
        <taxon>Hyphomicrobiales</taxon>
        <taxon>Rhizobiaceae</taxon>
        <taxon>Rhizobium/Agrobacterium group</taxon>
        <taxon>Rhizobium</taxon>
    </lineage>
</organism>
<gene>
    <name evidence="1" type="primary">glyS</name>
    <name type="ordered locus">RHECIAT_CH0000980</name>
</gene>
<reference key="1">
    <citation type="journal article" date="2010" name="Appl. Environ. Microbiol.">
        <title>Conserved symbiotic plasmid DNA sequences in the multireplicon pangenomic structure of Rhizobium etli.</title>
        <authorList>
            <person name="Gonzalez V."/>
            <person name="Acosta J.L."/>
            <person name="Santamaria R.I."/>
            <person name="Bustos P."/>
            <person name="Fernandez J.L."/>
            <person name="Hernandez Gonzalez I.L."/>
            <person name="Diaz R."/>
            <person name="Flores M."/>
            <person name="Palacios R."/>
            <person name="Mora J."/>
            <person name="Davila G."/>
        </authorList>
    </citation>
    <scope>NUCLEOTIDE SEQUENCE [LARGE SCALE GENOMIC DNA]</scope>
    <source>
        <strain>CIAT 652</strain>
    </source>
</reference>
<protein>
    <recommendedName>
        <fullName evidence="1">Glycine--tRNA ligase beta subunit</fullName>
        <ecNumber evidence="1">6.1.1.14</ecNumber>
    </recommendedName>
    <alternativeName>
        <fullName evidence="1">Glycyl-tRNA synthetase beta subunit</fullName>
        <shortName evidence="1">GlyRS</shortName>
    </alternativeName>
</protein>
<feature type="chain" id="PRO_1000101319" description="Glycine--tRNA ligase beta subunit">
    <location>
        <begin position="1"/>
        <end position="704"/>
    </location>
</feature>
<name>SYGB_RHIE6</name>
<accession>B3PRI2</accession>